<dbReference type="EC" id="7.1.1.2"/>
<dbReference type="EMBL" id="U83858">
    <property type="protein sequence ID" value="AAB87256.1"/>
    <property type="molecule type" value="Genomic_DNA"/>
</dbReference>
<dbReference type="SMR" id="O21595"/>
<dbReference type="GO" id="GO:0031966">
    <property type="term" value="C:mitochondrial membrane"/>
    <property type="evidence" value="ECO:0007669"/>
    <property type="project" value="UniProtKB-SubCell"/>
</dbReference>
<dbReference type="GO" id="GO:0030964">
    <property type="term" value="C:NADH dehydrogenase complex"/>
    <property type="evidence" value="ECO:0007669"/>
    <property type="project" value="TreeGrafter"/>
</dbReference>
<dbReference type="GO" id="GO:0008137">
    <property type="term" value="F:NADH dehydrogenase (ubiquinone) activity"/>
    <property type="evidence" value="ECO:0007669"/>
    <property type="project" value="UniProtKB-EC"/>
</dbReference>
<dbReference type="FunFam" id="1.20.58.1610:FF:000004">
    <property type="entry name" value="NADH-quinone oxidoreductase subunit A"/>
    <property type="match status" value="1"/>
</dbReference>
<dbReference type="Gene3D" id="1.20.58.1610">
    <property type="entry name" value="NADH:ubiquinone/plastoquinone oxidoreductase, chain 3"/>
    <property type="match status" value="1"/>
</dbReference>
<dbReference type="InterPro" id="IPR000440">
    <property type="entry name" value="NADH_UbQ/plastoQ_OxRdtase_su3"/>
</dbReference>
<dbReference type="InterPro" id="IPR038430">
    <property type="entry name" value="NDAH_ubi_oxred_su3_sf"/>
</dbReference>
<dbReference type="PANTHER" id="PTHR11058">
    <property type="entry name" value="NADH-UBIQUINONE OXIDOREDUCTASE CHAIN 3"/>
    <property type="match status" value="1"/>
</dbReference>
<dbReference type="PANTHER" id="PTHR11058:SF9">
    <property type="entry name" value="NADH-UBIQUINONE OXIDOREDUCTASE CHAIN 3"/>
    <property type="match status" value="1"/>
</dbReference>
<dbReference type="Pfam" id="PF00507">
    <property type="entry name" value="Oxidored_q4"/>
    <property type="match status" value="1"/>
</dbReference>
<feature type="chain" id="PRO_0000117782" description="NADH-ubiquinone oxidoreductase chain 3">
    <location>
        <begin position="1"/>
        <end position="115"/>
    </location>
</feature>
<feature type="transmembrane region" description="Helical" evidence="3">
    <location>
        <begin position="4"/>
        <end position="24"/>
    </location>
</feature>
<feature type="transmembrane region" description="Helical" evidence="3">
    <location>
        <begin position="55"/>
        <end position="75"/>
    </location>
</feature>
<feature type="transmembrane region" description="Helical" evidence="3">
    <location>
        <begin position="84"/>
        <end position="104"/>
    </location>
</feature>
<proteinExistence type="inferred from homology"/>
<comment type="function">
    <text evidence="1">Core subunit of the mitochondrial membrane respiratory chain NADH dehydrogenase (Complex I) that is believed to belong to the minimal assembly required for catalysis. Complex I functions in the transfer of electrons from NADH to the respiratory chain. The immediate electron acceptor for the enzyme is believed to be ubiquinone (By similarity).</text>
</comment>
<comment type="catalytic activity">
    <reaction>
        <text>a ubiquinone + NADH + 5 H(+)(in) = a ubiquinol + NAD(+) + 4 H(+)(out)</text>
        <dbReference type="Rhea" id="RHEA:29091"/>
        <dbReference type="Rhea" id="RHEA-COMP:9565"/>
        <dbReference type="Rhea" id="RHEA-COMP:9566"/>
        <dbReference type="ChEBI" id="CHEBI:15378"/>
        <dbReference type="ChEBI" id="CHEBI:16389"/>
        <dbReference type="ChEBI" id="CHEBI:17976"/>
        <dbReference type="ChEBI" id="CHEBI:57540"/>
        <dbReference type="ChEBI" id="CHEBI:57945"/>
        <dbReference type="EC" id="7.1.1.2"/>
    </reaction>
</comment>
<comment type="subunit">
    <text evidence="2">Core subunit of respiratory chain NADH dehydrogenase (Complex I) which is composed of 45 different subunits. Interacts with TMEM186. Interacts with TMEM242 (By similarity).</text>
</comment>
<comment type="subcellular location">
    <subcellularLocation>
        <location evidence="1">Mitochondrion membrane</location>
        <topology evidence="1">Multi-pass membrane protein</topology>
    </subcellularLocation>
</comment>
<comment type="similarity">
    <text evidence="4">Belongs to the complex I subunit 3 family.</text>
</comment>
<keyword id="KW-0249">Electron transport</keyword>
<keyword id="KW-0472">Membrane</keyword>
<keyword id="KW-0496">Mitochondrion</keyword>
<keyword id="KW-0520">NAD</keyword>
<keyword id="KW-0679">Respiratory chain</keyword>
<keyword id="KW-1278">Translocase</keyword>
<keyword id="KW-0812">Transmembrane</keyword>
<keyword id="KW-1133">Transmembrane helix</keyword>
<keyword id="KW-0813">Transport</keyword>
<keyword id="KW-0830">Ubiquinone</keyword>
<geneLocation type="mitochondrion"/>
<sequence length="115" mass="13188">MNMLMVLTVNMMLSTCLILIAFWLPQLNLYTEKANPYECGFDPMSSARLPFSMKFFLVAITFLLFDLEIALLLPLSWAIQMPNINIMTLTSFILVSVLALGLAYEWLQKGLEWTE</sequence>
<reference key="1">
    <citation type="journal article" date="1998" name="Mol. Biol. Evol.">
        <title>Molecular systematics and paleobiogeography of the South American sigmodontine rodents.</title>
        <authorList>
            <person name="Engel S.R."/>
            <person name="Hogan K.M."/>
            <person name="Taylor J.F."/>
            <person name="Davis S.K."/>
        </authorList>
    </citation>
    <scope>NUCLEOTIDE SEQUENCE [GENOMIC DNA]</scope>
</reference>
<organism>
    <name type="scientific">Onychomys leucogaster</name>
    <name type="common">Northern grasshopper mouse</name>
    <dbReference type="NCBI Taxonomy" id="38668"/>
    <lineage>
        <taxon>Eukaryota</taxon>
        <taxon>Metazoa</taxon>
        <taxon>Chordata</taxon>
        <taxon>Craniata</taxon>
        <taxon>Vertebrata</taxon>
        <taxon>Euteleostomi</taxon>
        <taxon>Mammalia</taxon>
        <taxon>Eutheria</taxon>
        <taxon>Euarchontoglires</taxon>
        <taxon>Glires</taxon>
        <taxon>Rodentia</taxon>
        <taxon>Myomorpha</taxon>
        <taxon>Muroidea</taxon>
        <taxon>Cricetidae</taxon>
        <taxon>Neotominae</taxon>
        <taxon>Onychomys</taxon>
    </lineage>
</organism>
<protein>
    <recommendedName>
        <fullName evidence="2">NADH-ubiquinone oxidoreductase chain 3</fullName>
        <ecNumber>7.1.1.2</ecNumber>
    </recommendedName>
    <alternativeName>
        <fullName>NADH dehydrogenase subunit 3</fullName>
    </alternativeName>
</protein>
<name>NU3M_ONYLE</name>
<accession>O21595</accession>
<evidence type="ECO:0000250" key="1"/>
<evidence type="ECO:0000250" key="2">
    <source>
        <dbReference type="UniProtKB" id="P03897"/>
    </source>
</evidence>
<evidence type="ECO:0000255" key="3"/>
<evidence type="ECO:0000305" key="4"/>
<gene>
    <name evidence="2" type="primary">MT-ND3</name>
    <name type="synonym">MTND3</name>
    <name type="synonym">NADH3</name>
    <name type="synonym">ND3</name>
</gene>